<accession>Q164C9</accession>
<reference key="1">
    <citation type="journal article" date="2007" name="J. Bacteriol.">
        <title>The complete genome sequence of Roseobacter denitrificans reveals a mixotrophic rather than photosynthetic metabolism.</title>
        <authorList>
            <person name="Swingley W.D."/>
            <person name="Sadekar S."/>
            <person name="Mastrian S.D."/>
            <person name="Matthies H.J."/>
            <person name="Hao J."/>
            <person name="Ramos H."/>
            <person name="Acharya C.R."/>
            <person name="Conrad A.L."/>
            <person name="Taylor H.L."/>
            <person name="Dejesa L.C."/>
            <person name="Shah M.K."/>
            <person name="O'Huallachain M.E."/>
            <person name="Lince M.T."/>
            <person name="Blankenship R.E."/>
            <person name="Beatty J.T."/>
            <person name="Touchman J.W."/>
        </authorList>
    </citation>
    <scope>NUCLEOTIDE SEQUENCE [LARGE SCALE GENOMIC DNA]</scope>
    <source>
        <strain>ATCC 33942 / OCh 114</strain>
    </source>
</reference>
<proteinExistence type="inferred from homology"/>
<organism>
    <name type="scientific">Roseobacter denitrificans (strain ATCC 33942 / OCh 114)</name>
    <name type="common">Erythrobacter sp. (strain OCh 114)</name>
    <name type="synonym">Roseobacter denitrificans</name>
    <dbReference type="NCBI Taxonomy" id="375451"/>
    <lineage>
        <taxon>Bacteria</taxon>
        <taxon>Pseudomonadati</taxon>
        <taxon>Pseudomonadota</taxon>
        <taxon>Alphaproteobacteria</taxon>
        <taxon>Rhodobacterales</taxon>
        <taxon>Roseobacteraceae</taxon>
        <taxon>Roseobacter</taxon>
    </lineage>
</organism>
<gene>
    <name evidence="1" type="primary">fabH</name>
    <name type="ordered locus">RD1_3156</name>
</gene>
<comment type="function">
    <text evidence="1">Catalyzes the condensation reaction of fatty acid synthesis by the addition to an acyl acceptor of two carbons from malonyl-ACP. Catalyzes the first condensation reaction which initiates fatty acid synthesis and may therefore play a role in governing the total rate of fatty acid production. Possesses both acetoacetyl-ACP synthase and acetyl transacylase activities. Its substrate specificity determines the biosynthesis of branched-chain and/or straight-chain of fatty acids.</text>
</comment>
<comment type="catalytic activity">
    <reaction evidence="1">
        <text>malonyl-[ACP] + acetyl-CoA + H(+) = 3-oxobutanoyl-[ACP] + CO2 + CoA</text>
        <dbReference type="Rhea" id="RHEA:12080"/>
        <dbReference type="Rhea" id="RHEA-COMP:9623"/>
        <dbReference type="Rhea" id="RHEA-COMP:9625"/>
        <dbReference type="ChEBI" id="CHEBI:15378"/>
        <dbReference type="ChEBI" id="CHEBI:16526"/>
        <dbReference type="ChEBI" id="CHEBI:57287"/>
        <dbReference type="ChEBI" id="CHEBI:57288"/>
        <dbReference type="ChEBI" id="CHEBI:78449"/>
        <dbReference type="ChEBI" id="CHEBI:78450"/>
        <dbReference type="EC" id="2.3.1.180"/>
    </reaction>
</comment>
<comment type="pathway">
    <text evidence="1">Lipid metabolism; fatty acid biosynthesis.</text>
</comment>
<comment type="subunit">
    <text evidence="1">Homodimer.</text>
</comment>
<comment type="subcellular location">
    <subcellularLocation>
        <location evidence="1">Cytoplasm</location>
    </subcellularLocation>
</comment>
<comment type="domain">
    <text evidence="1">The last Arg residue of the ACP-binding site is essential for the weak association between ACP/AcpP and FabH.</text>
</comment>
<comment type="similarity">
    <text evidence="1">Belongs to the thiolase-like superfamily. FabH family.</text>
</comment>
<name>FABH_ROSDO</name>
<dbReference type="EC" id="2.3.1.180" evidence="1"/>
<dbReference type="EMBL" id="CP000362">
    <property type="protein sequence ID" value="ABG32664.1"/>
    <property type="molecule type" value="Genomic_DNA"/>
</dbReference>
<dbReference type="RefSeq" id="WP_011569280.1">
    <property type="nucleotide sequence ID" value="NC_008209.1"/>
</dbReference>
<dbReference type="SMR" id="Q164C9"/>
<dbReference type="STRING" id="375451.RD1_3156"/>
<dbReference type="KEGG" id="rde:RD1_3156"/>
<dbReference type="eggNOG" id="COG0332">
    <property type="taxonomic scope" value="Bacteria"/>
</dbReference>
<dbReference type="HOGENOM" id="CLU_039592_3_1_5"/>
<dbReference type="OrthoDB" id="9815506at2"/>
<dbReference type="UniPathway" id="UPA00094"/>
<dbReference type="Proteomes" id="UP000007029">
    <property type="component" value="Chromosome"/>
</dbReference>
<dbReference type="GO" id="GO:0005737">
    <property type="term" value="C:cytoplasm"/>
    <property type="evidence" value="ECO:0007669"/>
    <property type="project" value="UniProtKB-SubCell"/>
</dbReference>
<dbReference type="GO" id="GO:0004315">
    <property type="term" value="F:3-oxoacyl-[acyl-carrier-protein] synthase activity"/>
    <property type="evidence" value="ECO:0007669"/>
    <property type="project" value="InterPro"/>
</dbReference>
<dbReference type="GO" id="GO:0033818">
    <property type="term" value="F:beta-ketoacyl-acyl-carrier-protein synthase III activity"/>
    <property type="evidence" value="ECO:0007669"/>
    <property type="project" value="UniProtKB-UniRule"/>
</dbReference>
<dbReference type="GO" id="GO:0006633">
    <property type="term" value="P:fatty acid biosynthetic process"/>
    <property type="evidence" value="ECO:0007669"/>
    <property type="project" value="UniProtKB-UniRule"/>
</dbReference>
<dbReference type="GO" id="GO:0044550">
    <property type="term" value="P:secondary metabolite biosynthetic process"/>
    <property type="evidence" value="ECO:0007669"/>
    <property type="project" value="TreeGrafter"/>
</dbReference>
<dbReference type="CDD" id="cd00830">
    <property type="entry name" value="KAS_III"/>
    <property type="match status" value="1"/>
</dbReference>
<dbReference type="FunFam" id="3.40.47.10:FF:000004">
    <property type="entry name" value="3-oxoacyl-[acyl-carrier-protein] synthase 3"/>
    <property type="match status" value="1"/>
</dbReference>
<dbReference type="Gene3D" id="3.40.47.10">
    <property type="match status" value="1"/>
</dbReference>
<dbReference type="HAMAP" id="MF_01815">
    <property type="entry name" value="FabH"/>
    <property type="match status" value="1"/>
</dbReference>
<dbReference type="InterPro" id="IPR013747">
    <property type="entry name" value="ACP_syn_III_C"/>
</dbReference>
<dbReference type="InterPro" id="IPR013751">
    <property type="entry name" value="ACP_syn_III_N"/>
</dbReference>
<dbReference type="InterPro" id="IPR004655">
    <property type="entry name" value="FabH"/>
</dbReference>
<dbReference type="InterPro" id="IPR016039">
    <property type="entry name" value="Thiolase-like"/>
</dbReference>
<dbReference type="NCBIfam" id="TIGR00747">
    <property type="entry name" value="fabH"/>
    <property type="match status" value="1"/>
</dbReference>
<dbReference type="NCBIfam" id="NF006829">
    <property type="entry name" value="PRK09352.1"/>
    <property type="match status" value="1"/>
</dbReference>
<dbReference type="PANTHER" id="PTHR34069">
    <property type="entry name" value="3-OXOACYL-[ACYL-CARRIER-PROTEIN] SYNTHASE 3"/>
    <property type="match status" value="1"/>
</dbReference>
<dbReference type="PANTHER" id="PTHR34069:SF2">
    <property type="entry name" value="BETA-KETOACYL-[ACYL-CARRIER-PROTEIN] SYNTHASE III"/>
    <property type="match status" value="1"/>
</dbReference>
<dbReference type="Pfam" id="PF08545">
    <property type="entry name" value="ACP_syn_III"/>
    <property type="match status" value="1"/>
</dbReference>
<dbReference type="Pfam" id="PF08541">
    <property type="entry name" value="ACP_syn_III_C"/>
    <property type="match status" value="1"/>
</dbReference>
<dbReference type="SUPFAM" id="SSF53901">
    <property type="entry name" value="Thiolase-like"/>
    <property type="match status" value="1"/>
</dbReference>
<evidence type="ECO:0000255" key="1">
    <source>
        <dbReference type="HAMAP-Rule" id="MF_01815"/>
    </source>
</evidence>
<protein>
    <recommendedName>
        <fullName evidence="1">Beta-ketoacyl-[acyl-carrier-protein] synthase III</fullName>
        <shortName evidence="1">Beta-ketoacyl-ACP synthase III</shortName>
        <shortName evidence="1">KAS III</shortName>
        <ecNumber evidence="1">2.3.1.180</ecNumber>
    </recommendedName>
    <alternativeName>
        <fullName evidence="1">3-oxoacyl-[acyl-carrier-protein] synthase 3</fullName>
    </alternativeName>
    <alternativeName>
        <fullName evidence="1">3-oxoacyl-[acyl-carrier-protein] synthase III</fullName>
    </alternativeName>
</protein>
<feature type="chain" id="PRO_1000056402" description="Beta-ketoacyl-[acyl-carrier-protein] synthase III">
    <location>
        <begin position="1"/>
        <end position="323"/>
    </location>
</feature>
<feature type="region of interest" description="ACP-binding" evidence="1">
    <location>
        <begin position="251"/>
        <end position="255"/>
    </location>
</feature>
<feature type="active site" evidence="1">
    <location>
        <position position="114"/>
    </location>
</feature>
<feature type="active site" evidence="1">
    <location>
        <position position="250"/>
    </location>
</feature>
<feature type="active site" evidence="1">
    <location>
        <position position="280"/>
    </location>
</feature>
<keyword id="KW-0012">Acyltransferase</keyword>
<keyword id="KW-0963">Cytoplasm</keyword>
<keyword id="KW-0275">Fatty acid biosynthesis</keyword>
<keyword id="KW-0276">Fatty acid metabolism</keyword>
<keyword id="KW-0444">Lipid biosynthesis</keyword>
<keyword id="KW-0443">Lipid metabolism</keyword>
<keyword id="KW-0511">Multifunctional enzyme</keyword>
<keyword id="KW-1185">Reference proteome</keyword>
<keyword id="KW-0808">Transferase</keyword>
<sequence length="323" mass="33841">MTLRAVVTGVGHYLPDRIVPNSEFEKTLDTNDEWIRARSGIERRHFAAEGETTASMAAAASRAALSMAGAEAQDVDAIIVATSTADLTFPSAATMVQAELGMTRGFAFDVQAVCAGFVFALSNANALILSGQARRVLVIGAEAFSRIMDWTDRSTCVLFGDGAGAVLLEAQDGTGTSADRGILSTDLNSDGRHKDLLYVDGGVSTGTTGYLRMQGNQVFRHAVEKLAATATTALERAGVSASDVDWVVPHQANIRIIQGTAKKLGVSMDRVVVTVQDHGNTSAASIPLALSVGHARGQIKQGDLVVTEAIGGGLAWGAVVLRW</sequence>